<geneLocation type="chloroplast"/>
<sequence length="247" mass="27159">MNVLPCSINTLKGLYDISEVEVGQHFYWQIGGFQVHAQVLITSWVVIAILLGSAAIAVRNPQTIPTDGQNFFEYVLEFIRDLTKTQIGEEYGPWVPFIGTMFLFIFVSNWSGALLPRKIIQLPHGELAAPTNDINTTVALALLTSVAYFYAGLTKKGLGYFGKYIQPTPILLPINILEDFTKPLSLSFRLFGNILADELVVVVLVSLVPLVVPIPVMFLGLFTSGIQALIFATLAAAYIGESMEGHH</sequence>
<dbReference type="EMBL" id="AJ428413">
    <property type="protein sequence ID" value="CAD28709.1"/>
    <property type="molecule type" value="Genomic_DNA"/>
</dbReference>
<dbReference type="RefSeq" id="NP_862742.1">
    <property type="nucleotide sequence ID" value="NC_004993.1"/>
</dbReference>
<dbReference type="SMR" id="Q7YJY2"/>
<dbReference type="GeneID" id="2597979"/>
<dbReference type="GO" id="GO:0009535">
    <property type="term" value="C:chloroplast thylakoid membrane"/>
    <property type="evidence" value="ECO:0007669"/>
    <property type="project" value="UniProtKB-SubCell"/>
</dbReference>
<dbReference type="GO" id="GO:0005886">
    <property type="term" value="C:plasma membrane"/>
    <property type="evidence" value="ECO:0007669"/>
    <property type="project" value="UniProtKB-UniRule"/>
</dbReference>
<dbReference type="GO" id="GO:0045259">
    <property type="term" value="C:proton-transporting ATP synthase complex"/>
    <property type="evidence" value="ECO:0007669"/>
    <property type="project" value="UniProtKB-KW"/>
</dbReference>
<dbReference type="GO" id="GO:0046933">
    <property type="term" value="F:proton-transporting ATP synthase activity, rotational mechanism"/>
    <property type="evidence" value="ECO:0007669"/>
    <property type="project" value="UniProtKB-UniRule"/>
</dbReference>
<dbReference type="CDD" id="cd00310">
    <property type="entry name" value="ATP-synt_Fo_a_6"/>
    <property type="match status" value="1"/>
</dbReference>
<dbReference type="FunFam" id="1.20.120.220:FF:000001">
    <property type="entry name" value="ATP synthase subunit a, chloroplastic"/>
    <property type="match status" value="1"/>
</dbReference>
<dbReference type="Gene3D" id="1.20.120.220">
    <property type="entry name" value="ATP synthase, F0 complex, subunit A"/>
    <property type="match status" value="1"/>
</dbReference>
<dbReference type="HAMAP" id="MF_01393">
    <property type="entry name" value="ATP_synth_a_bact"/>
    <property type="match status" value="1"/>
</dbReference>
<dbReference type="InterPro" id="IPR045082">
    <property type="entry name" value="ATP_syn_F0_a_bact/chloroplast"/>
</dbReference>
<dbReference type="InterPro" id="IPR000568">
    <property type="entry name" value="ATP_synth_F0_asu"/>
</dbReference>
<dbReference type="InterPro" id="IPR023011">
    <property type="entry name" value="ATP_synth_F0_asu_AS"/>
</dbReference>
<dbReference type="InterPro" id="IPR035908">
    <property type="entry name" value="F0_ATP_A_sf"/>
</dbReference>
<dbReference type="NCBIfam" id="TIGR01131">
    <property type="entry name" value="ATP_synt_6_or_A"/>
    <property type="match status" value="1"/>
</dbReference>
<dbReference type="PANTHER" id="PTHR42823">
    <property type="entry name" value="ATP SYNTHASE SUBUNIT A, CHLOROPLASTIC"/>
    <property type="match status" value="1"/>
</dbReference>
<dbReference type="PANTHER" id="PTHR42823:SF3">
    <property type="entry name" value="ATP SYNTHASE SUBUNIT A, CHLOROPLASTIC"/>
    <property type="match status" value="1"/>
</dbReference>
<dbReference type="Pfam" id="PF00119">
    <property type="entry name" value="ATP-synt_A"/>
    <property type="match status" value="1"/>
</dbReference>
<dbReference type="PRINTS" id="PR00123">
    <property type="entry name" value="ATPASEA"/>
</dbReference>
<dbReference type="SUPFAM" id="SSF81336">
    <property type="entry name" value="F1F0 ATP synthase subunit A"/>
    <property type="match status" value="1"/>
</dbReference>
<dbReference type="PROSITE" id="PS00449">
    <property type="entry name" value="ATPASE_A"/>
    <property type="match status" value="1"/>
</dbReference>
<name>ATPI_CALFG</name>
<reference key="1">
    <citation type="journal article" date="2003" name="Plant Syst. Evol.">
        <title>The chloroplast genome of the 'basal' angiosperm Calycanthus fertilis -- structural and phylogenetic analyses.</title>
        <authorList>
            <person name="Goremykin V.V."/>
            <person name="Hirsch-Ernst K.I."/>
            <person name="Woelfl S."/>
            <person name="Hellwig F.H."/>
        </authorList>
    </citation>
    <scope>NUCLEOTIDE SEQUENCE [LARGE SCALE GENOMIC DNA]</scope>
</reference>
<organism>
    <name type="scientific">Calycanthus floridus var. glaucus</name>
    <name type="common">Eastern sweetshrub</name>
    <name type="synonym">Calycanthus fertilis var. ferax</name>
    <dbReference type="NCBI Taxonomy" id="212734"/>
    <lineage>
        <taxon>Eukaryota</taxon>
        <taxon>Viridiplantae</taxon>
        <taxon>Streptophyta</taxon>
        <taxon>Embryophyta</taxon>
        <taxon>Tracheophyta</taxon>
        <taxon>Spermatophyta</taxon>
        <taxon>Magnoliopsida</taxon>
        <taxon>Magnoliidae</taxon>
        <taxon>Laurales</taxon>
        <taxon>Calycanthaceae</taxon>
        <taxon>Calycanthus</taxon>
    </lineage>
</organism>
<evidence type="ECO:0000255" key="1">
    <source>
        <dbReference type="HAMAP-Rule" id="MF_01393"/>
    </source>
</evidence>
<comment type="function">
    <text evidence="1">Key component of the proton channel; it plays a direct role in the translocation of protons across the membrane.</text>
</comment>
<comment type="subunit">
    <text evidence="1">F-type ATPases have 2 components, CF(1) - the catalytic core - and CF(0) - the membrane proton channel. CF(1) has five subunits: alpha(3), beta(3), gamma(1), delta(1), epsilon(1). CF(0) has four main subunits: a, b, b' and c.</text>
</comment>
<comment type="subcellular location">
    <subcellularLocation>
        <location evidence="1">Plastid</location>
        <location evidence="1">Chloroplast thylakoid membrane</location>
        <topology evidence="1">Multi-pass membrane protein</topology>
    </subcellularLocation>
</comment>
<comment type="similarity">
    <text evidence="1">Belongs to the ATPase A chain family.</text>
</comment>
<keyword id="KW-0066">ATP synthesis</keyword>
<keyword id="KW-0138">CF(0)</keyword>
<keyword id="KW-0150">Chloroplast</keyword>
<keyword id="KW-0375">Hydrogen ion transport</keyword>
<keyword id="KW-0406">Ion transport</keyword>
<keyword id="KW-0472">Membrane</keyword>
<keyword id="KW-0934">Plastid</keyword>
<keyword id="KW-0793">Thylakoid</keyword>
<keyword id="KW-0812">Transmembrane</keyword>
<keyword id="KW-1133">Transmembrane helix</keyword>
<keyword id="KW-0813">Transport</keyword>
<gene>
    <name evidence="1" type="primary">atpI</name>
</gene>
<protein>
    <recommendedName>
        <fullName evidence="1">ATP synthase subunit a, chloroplastic</fullName>
    </recommendedName>
    <alternativeName>
        <fullName evidence="1">ATP synthase F0 sector subunit a</fullName>
    </alternativeName>
    <alternativeName>
        <fullName evidence="1">F-ATPase subunit IV</fullName>
    </alternativeName>
</protein>
<accession>Q7YJY2</accession>
<feature type="chain" id="PRO_0000362534" description="ATP synthase subunit a, chloroplastic">
    <location>
        <begin position="1"/>
        <end position="247"/>
    </location>
</feature>
<feature type="transmembrane region" description="Helical" evidence="1">
    <location>
        <begin position="38"/>
        <end position="58"/>
    </location>
</feature>
<feature type="transmembrane region" description="Helical" evidence="1">
    <location>
        <begin position="95"/>
        <end position="115"/>
    </location>
</feature>
<feature type="transmembrane region" description="Helical" evidence="1">
    <location>
        <begin position="134"/>
        <end position="154"/>
    </location>
</feature>
<feature type="transmembrane region" description="Helical" evidence="1">
    <location>
        <begin position="199"/>
        <end position="219"/>
    </location>
</feature>
<feature type="transmembrane region" description="Helical" evidence="1">
    <location>
        <begin position="220"/>
        <end position="240"/>
    </location>
</feature>
<proteinExistence type="inferred from homology"/>